<reference key="1">
    <citation type="journal article" date="2007" name="J. Bacteriol.">
        <title>The complete genome sequence of the lactic acid bacterial paradigm Lactococcus lactis subsp. cremoris MG1363.</title>
        <authorList>
            <person name="Wegmann U."/>
            <person name="O'Connell-Motherway M."/>
            <person name="Zomer A."/>
            <person name="Buist G."/>
            <person name="Shearman C."/>
            <person name="Canchaya C."/>
            <person name="Ventura M."/>
            <person name="Goesmann A."/>
            <person name="Gasson M.J."/>
            <person name="Kuipers O.P."/>
            <person name="van Sinderen D."/>
            <person name="Kok J."/>
        </authorList>
    </citation>
    <scope>NUCLEOTIDE SEQUENCE [LARGE SCALE GENOMIC DNA]</scope>
    <source>
        <strain>MG1363</strain>
    </source>
</reference>
<feature type="chain" id="PRO_0000298745" description="UPF0346 protein llmg_2280">
    <location>
        <begin position="1"/>
        <end position="69"/>
    </location>
</feature>
<sequence>MTFYNYLMRHRAPVEKDDATRLANLVFQDPLFPKQSKDFDEISTYLETEAPFYFNLTLFDNVWLSYLEA</sequence>
<organism>
    <name type="scientific">Lactococcus lactis subsp. cremoris (strain MG1363)</name>
    <dbReference type="NCBI Taxonomy" id="416870"/>
    <lineage>
        <taxon>Bacteria</taxon>
        <taxon>Bacillati</taxon>
        <taxon>Bacillota</taxon>
        <taxon>Bacilli</taxon>
        <taxon>Lactobacillales</taxon>
        <taxon>Streptococcaceae</taxon>
        <taxon>Lactococcus</taxon>
        <taxon>Lactococcus cremoris subsp. cremoris</taxon>
    </lineage>
</organism>
<name>Y2280_LACLM</name>
<dbReference type="EMBL" id="AM406671">
    <property type="protein sequence ID" value="CAL98846.1"/>
    <property type="molecule type" value="Genomic_DNA"/>
</dbReference>
<dbReference type="RefSeq" id="WP_011677077.1">
    <property type="nucleotide sequence ID" value="NC_009004.1"/>
</dbReference>
<dbReference type="SMR" id="A2RNF7"/>
<dbReference type="STRING" id="416870.llmg_2280"/>
<dbReference type="GeneID" id="61110330"/>
<dbReference type="KEGG" id="llm:llmg_2280"/>
<dbReference type="eggNOG" id="COG4479">
    <property type="taxonomic scope" value="Bacteria"/>
</dbReference>
<dbReference type="HOGENOM" id="CLU_177534_1_0_9"/>
<dbReference type="OrthoDB" id="2242851at2"/>
<dbReference type="PhylomeDB" id="A2RNF7"/>
<dbReference type="Proteomes" id="UP000000364">
    <property type="component" value="Chromosome"/>
</dbReference>
<dbReference type="Gene3D" id="1.10.150.260">
    <property type="entry name" value="YozE SAM-like"/>
    <property type="match status" value="1"/>
</dbReference>
<dbReference type="HAMAP" id="MF_01538">
    <property type="entry name" value="UPF0346"/>
    <property type="match status" value="1"/>
</dbReference>
<dbReference type="InterPro" id="IPR010673">
    <property type="entry name" value="UPF0346"/>
</dbReference>
<dbReference type="InterPro" id="IPR023089">
    <property type="entry name" value="YozE_SAM-like"/>
</dbReference>
<dbReference type="InterPro" id="IPR036806">
    <property type="entry name" value="YozE_SAM-like_sf"/>
</dbReference>
<dbReference type="NCBIfam" id="NF010193">
    <property type="entry name" value="PRK13672.1"/>
    <property type="match status" value="1"/>
</dbReference>
<dbReference type="Pfam" id="PF06855">
    <property type="entry name" value="YozE_SAM_like"/>
    <property type="match status" value="1"/>
</dbReference>
<dbReference type="PIRSF" id="PIRSF037262">
    <property type="entry name" value="UCP037262"/>
    <property type="match status" value="1"/>
</dbReference>
<dbReference type="SUPFAM" id="SSF140652">
    <property type="entry name" value="YozE-like"/>
    <property type="match status" value="1"/>
</dbReference>
<comment type="similarity">
    <text evidence="1">Belongs to the UPF0346 family.</text>
</comment>
<gene>
    <name type="ordered locus">llmg_2280</name>
</gene>
<accession>A2RNF7</accession>
<proteinExistence type="inferred from homology"/>
<protein>
    <recommendedName>
        <fullName evidence="1">UPF0346 protein llmg_2280</fullName>
    </recommendedName>
</protein>
<evidence type="ECO:0000255" key="1">
    <source>
        <dbReference type="HAMAP-Rule" id="MF_01538"/>
    </source>
</evidence>